<sequence length="311" mass="34125">MVELEDLPNVGAKTAQKLRDAGFGDMMRLATATAKELSVKAEIGEGVAEKVIEAARRAEKIDFETAFDVMERRKDVGRITTGSKALDELIGGGIETQAITEVFGEFGSGKSQLSHELAVTVQLPEERGGLDAEAVFIDTENTFRPERIEQIANAFELDLEEVLNKIHIARAFNSSHQILMAEKVNELIQEGKNIRLVIVDSLTAHFRAEYVGREALATRQQKLNQHLHTLQNIANTYNAAVFVTNQVQARPDAFFGSPTKAIGGHVLGHAATYRIWLKKGLAGKRIARLVDSPHLPEGECVFKITTAGIVD</sequence>
<protein>
    <recommendedName>
        <fullName>DNA repair and recombination protein RadA</fullName>
    </recommendedName>
</protein>
<keyword id="KW-0067">ATP-binding</keyword>
<keyword id="KW-0227">DNA damage</keyword>
<keyword id="KW-0233">DNA recombination</keyword>
<keyword id="KW-0238">DNA-binding</keyword>
<keyword id="KW-0547">Nucleotide-binding</keyword>
<keyword id="KW-1185">Reference proteome</keyword>
<gene>
    <name type="primary">radA</name>
    <name type="ordered locus">MTH_1383</name>
</gene>
<name>RADA_METTH</name>
<reference key="1">
    <citation type="journal article" date="1997" name="J. Bacteriol.">
        <title>Complete genome sequence of Methanobacterium thermoautotrophicum deltaH: functional analysis and comparative genomics.</title>
        <authorList>
            <person name="Smith D.R."/>
            <person name="Doucette-Stamm L.A."/>
            <person name="Deloughery C."/>
            <person name="Lee H.-M."/>
            <person name="Dubois J."/>
            <person name="Aldredge T."/>
            <person name="Bashirzadeh R."/>
            <person name="Blakely D."/>
            <person name="Cook R."/>
            <person name="Gilbert K."/>
            <person name="Harrison D."/>
            <person name="Hoang L."/>
            <person name="Keagle P."/>
            <person name="Lumm W."/>
            <person name="Pothier B."/>
            <person name="Qiu D."/>
            <person name="Spadafora R."/>
            <person name="Vicare R."/>
            <person name="Wang Y."/>
            <person name="Wierzbowski J."/>
            <person name="Gibson R."/>
            <person name="Jiwani N."/>
            <person name="Caruso A."/>
            <person name="Bush D."/>
            <person name="Safer H."/>
            <person name="Patwell D."/>
            <person name="Prabhakar S."/>
            <person name="McDougall S."/>
            <person name="Shimer G."/>
            <person name="Goyal A."/>
            <person name="Pietrovski S."/>
            <person name="Church G.M."/>
            <person name="Daniels C.J."/>
            <person name="Mao J.-I."/>
            <person name="Rice P."/>
            <person name="Noelling J."/>
            <person name="Reeve J.N."/>
        </authorList>
    </citation>
    <scope>NUCLEOTIDE SEQUENCE [LARGE SCALE GENOMIC DNA]</scope>
    <source>
        <strain>ATCC 29096 / DSM 1053 / JCM 10044 / NBRC 100330 / Delta H</strain>
    </source>
</reference>
<organism>
    <name type="scientific">Methanothermobacter thermautotrophicus (strain ATCC 29096 / DSM 1053 / JCM 10044 / NBRC 100330 / Delta H)</name>
    <name type="common">Methanobacterium thermoautotrophicum</name>
    <dbReference type="NCBI Taxonomy" id="187420"/>
    <lineage>
        <taxon>Archaea</taxon>
        <taxon>Methanobacteriati</taxon>
        <taxon>Methanobacteriota</taxon>
        <taxon>Methanomada group</taxon>
        <taxon>Methanobacteria</taxon>
        <taxon>Methanobacteriales</taxon>
        <taxon>Methanobacteriaceae</taxon>
        <taxon>Methanothermobacter</taxon>
    </lineage>
</organism>
<dbReference type="EMBL" id="AE000666">
    <property type="protein sequence ID" value="AAB85860.1"/>
    <property type="molecule type" value="Genomic_DNA"/>
</dbReference>
<dbReference type="PIR" id="A69051">
    <property type="entry name" value="A69051"/>
</dbReference>
<dbReference type="RefSeq" id="WP_010876995.1">
    <property type="nucleotide sequence ID" value="NC_000916.1"/>
</dbReference>
<dbReference type="SMR" id="O27436"/>
<dbReference type="FunCoup" id="O27436">
    <property type="interactions" value="106"/>
</dbReference>
<dbReference type="STRING" id="187420.MTH_1383"/>
<dbReference type="PaxDb" id="187420-MTH_1383"/>
<dbReference type="EnsemblBacteria" id="AAB85860">
    <property type="protein sequence ID" value="AAB85860"/>
    <property type="gene ID" value="MTH_1383"/>
</dbReference>
<dbReference type="GeneID" id="82297821"/>
<dbReference type="KEGG" id="mth:MTH_1383"/>
<dbReference type="PATRIC" id="fig|187420.15.peg.1348"/>
<dbReference type="HOGENOM" id="CLU_041732_0_0_2"/>
<dbReference type="InParanoid" id="O27436"/>
<dbReference type="Proteomes" id="UP000005223">
    <property type="component" value="Chromosome"/>
</dbReference>
<dbReference type="GO" id="GO:0005524">
    <property type="term" value="F:ATP binding"/>
    <property type="evidence" value="ECO:0007669"/>
    <property type="project" value="UniProtKB-UniRule"/>
</dbReference>
<dbReference type="GO" id="GO:0016887">
    <property type="term" value="F:ATP hydrolysis activity"/>
    <property type="evidence" value="ECO:0007669"/>
    <property type="project" value="InterPro"/>
</dbReference>
<dbReference type="GO" id="GO:0140664">
    <property type="term" value="F:ATP-dependent DNA damage sensor activity"/>
    <property type="evidence" value="ECO:0007669"/>
    <property type="project" value="InterPro"/>
</dbReference>
<dbReference type="GO" id="GO:0003684">
    <property type="term" value="F:damaged DNA binding"/>
    <property type="evidence" value="ECO:0007669"/>
    <property type="project" value="UniProtKB-UniRule"/>
</dbReference>
<dbReference type="GO" id="GO:0006310">
    <property type="term" value="P:DNA recombination"/>
    <property type="evidence" value="ECO:0007669"/>
    <property type="project" value="UniProtKB-UniRule"/>
</dbReference>
<dbReference type="GO" id="GO:0006281">
    <property type="term" value="P:DNA repair"/>
    <property type="evidence" value="ECO:0007669"/>
    <property type="project" value="UniProtKB-UniRule"/>
</dbReference>
<dbReference type="CDD" id="cd19515">
    <property type="entry name" value="archRadA"/>
    <property type="match status" value="1"/>
</dbReference>
<dbReference type="FunFam" id="3.40.50.300:FF:002052">
    <property type="entry name" value="DNA repair protein RAD51 homolog"/>
    <property type="match status" value="1"/>
</dbReference>
<dbReference type="Gene3D" id="1.10.150.20">
    <property type="entry name" value="5' to 3' exonuclease, C-terminal subdomain"/>
    <property type="match status" value="1"/>
</dbReference>
<dbReference type="Gene3D" id="3.40.50.300">
    <property type="entry name" value="P-loop containing nucleotide triphosphate hydrolases"/>
    <property type="match status" value="1"/>
</dbReference>
<dbReference type="HAMAP" id="MF_00348">
    <property type="entry name" value="RadA_arch"/>
    <property type="match status" value="1"/>
</dbReference>
<dbReference type="InterPro" id="IPR003593">
    <property type="entry name" value="AAA+_ATPase"/>
</dbReference>
<dbReference type="InterPro" id="IPR013632">
    <property type="entry name" value="DNA_recomb/repair_Rad51_C"/>
</dbReference>
<dbReference type="InterPro" id="IPR011938">
    <property type="entry name" value="DNA_recomb/repair_RadA"/>
</dbReference>
<dbReference type="InterPro" id="IPR016467">
    <property type="entry name" value="DNA_recomb/repair_RecA-like"/>
</dbReference>
<dbReference type="InterPro" id="IPR010995">
    <property type="entry name" value="DNA_repair_Rad51/TF_NusA_a-hlx"/>
</dbReference>
<dbReference type="InterPro" id="IPR003583">
    <property type="entry name" value="Hlx-hairpin-Hlx_DNA-bd_motif"/>
</dbReference>
<dbReference type="InterPro" id="IPR027417">
    <property type="entry name" value="P-loop_NTPase"/>
</dbReference>
<dbReference type="InterPro" id="IPR020588">
    <property type="entry name" value="RecA_ATP-bd"/>
</dbReference>
<dbReference type="InterPro" id="IPR020587">
    <property type="entry name" value="RecA_monomer-monomer_interface"/>
</dbReference>
<dbReference type="NCBIfam" id="NF003301">
    <property type="entry name" value="PRK04301.1"/>
    <property type="match status" value="1"/>
</dbReference>
<dbReference type="NCBIfam" id="TIGR02236">
    <property type="entry name" value="recomb_radA"/>
    <property type="match status" value="1"/>
</dbReference>
<dbReference type="PANTHER" id="PTHR22942:SF30">
    <property type="entry name" value="MEIOTIC RECOMBINATION PROTEIN DMC1_LIM15 HOMOLOG"/>
    <property type="match status" value="1"/>
</dbReference>
<dbReference type="PANTHER" id="PTHR22942">
    <property type="entry name" value="RECA/RAD51/RADA DNA STRAND-PAIRING FAMILY MEMBER"/>
    <property type="match status" value="1"/>
</dbReference>
<dbReference type="Pfam" id="PF14520">
    <property type="entry name" value="HHH_5"/>
    <property type="match status" value="1"/>
</dbReference>
<dbReference type="Pfam" id="PF08423">
    <property type="entry name" value="Rad51"/>
    <property type="match status" value="1"/>
</dbReference>
<dbReference type="PIRSF" id="PIRSF005856">
    <property type="entry name" value="Rad51"/>
    <property type="match status" value="1"/>
</dbReference>
<dbReference type="SMART" id="SM00382">
    <property type="entry name" value="AAA"/>
    <property type="match status" value="1"/>
</dbReference>
<dbReference type="SMART" id="SM00278">
    <property type="entry name" value="HhH1"/>
    <property type="match status" value="2"/>
</dbReference>
<dbReference type="SUPFAM" id="SSF52540">
    <property type="entry name" value="P-loop containing nucleoside triphosphate hydrolases"/>
    <property type="match status" value="1"/>
</dbReference>
<dbReference type="SUPFAM" id="SSF47794">
    <property type="entry name" value="Rad51 N-terminal domain-like"/>
    <property type="match status" value="1"/>
</dbReference>
<dbReference type="PROSITE" id="PS50162">
    <property type="entry name" value="RECA_2"/>
    <property type="match status" value="1"/>
</dbReference>
<dbReference type="PROSITE" id="PS50163">
    <property type="entry name" value="RECA_3"/>
    <property type="match status" value="1"/>
</dbReference>
<proteinExistence type="inferred from homology"/>
<evidence type="ECO:0000250" key="1"/>
<evidence type="ECO:0000255" key="2"/>
<evidence type="ECO:0000305" key="3"/>
<accession>O27436</accession>
<comment type="function">
    <text evidence="1">Involved in DNA repair and in homologous recombination. Binds and assemble on single-stranded DNA to form a nucleoprotein filament. Hydrolyzes ATP in a ssDNA-dependent manner and promotes DNA strand exchange between homologous DNA molecules (By similarity).</text>
</comment>
<comment type="similarity">
    <text evidence="3">Belongs to the eukaryotic RecA-like protein family.</text>
</comment>
<feature type="chain" id="PRO_0000150098" description="DNA repair and recombination protein RadA">
    <location>
        <begin position="1"/>
        <end position="311"/>
    </location>
</feature>
<feature type="binding site" evidence="2">
    <location>
        <begin position="104"/>
        <end position="111"/>
    </location>
    <ligand>
        <name>ATP</name>
        <dbReference type="ChEBI" id="CHEBI:30616"/>
    </ligand>
</feature>